<sequence length="505" mass="58380">MSQQDKKLTGVFGHPVSDRENSMTAGPRGPLLMQDIYFLEQMSQFDREVIPERRMHAKGSGAFGTFTVTKDITKYTNAKIFSEIGKQTEMFARFSTVAGERGAADAERDIRGFALKFYTEEGNWDLVGNNTPVFFFRDPKLFVSLNRAVKRDPRTNMRDAQNNWDFWTGLPEALHQVTILMSDRGIPKDLRHMHGFGSHTYSMYNDSGERVWVKFHFRTQQGIENLTDEEAAEIIATDRDSSQRDLFEAIEKGDYPKWTMYIQVMTEEQAKNHKDNPFDLTKVWYHDEYPLIEVGEFELNRNPDNYFMDVEQAAFAPTNIIPGLDFSPDKMLQGRLFSYGDAQRYRLGVNHWQIPVNQPKGVGIENICPFSRDGQMRVVDNNQGGGTHYYPNNHGKFDSQPEYKKPPFPTDGYGYEYNQRQDDDNYFEQPGKLFRLQSEDAKERIFTNTANAMEGVTDDVKRRHIRHCYKADPEYGKGVAKALGIDINSIDLETENDETYENFEK</sequence>
<feature type="chain" id="PRO_0000278274" description="Catalase">
    <location>
        <begin position="1"/>
        <end position="505"/>
    </location>
</feature>
<feature type="region of interest" description="Disordered" evidence="3">
    <location>
        <begin position="1"/>
        <end position="25"/>
    </location>
</feature>
<feature type="active site" evidence="2">
    <location>
        <position position="56"/>
    </location>
</feature>
<feature type="active site" evidence="2">
    <location>
        <position position="129"/>
    </location>
</feature>
<feature type="binding site" description="axial binding residue" evidence="1">
    <location>
        <position position="339"/>
    </location>
    <ligand>
        <name>heme</name>
        <dbReference type="ChEBI" id="CHEBI:30413"/>
    </ligand>
    <ligandPart>
        <name>Fe</name>
        <dbReference type="ChEBI" id="CHEBI:18248"/>
    </ligandPart>
</feature>
<protein>
    <recommendedName>
        <fullName>Catalase</fullName>
        <ecNumber>1.11.1.6</ecNumber>
    </recommendedName>
</protein>
<gene>
    <name type="primary">katA</name>
    <name type="ordered locus">SAUSA300_1232</name>
</gene>
<reference key="1">
    <citation type="journal article" date="2006" name="Lancet">
        <title>Complete genome sequence of USA300, an epidemic clone of community-acquired meticillin-resistant Staphylococcus aureus.</title>
        <authorList>
            <person name="Diep B.A."/>
            <person name="Gill S.R."/>
            <person name="Chang R.F."/>
            <person name="Phan T.H."/>
            <person name="Chen J.H."/>
            <person name="Davidson M.G."/>
            <person name="Lin F."/>
            <person name="Lin J."/>
            <person name="Carleton H.A."/>
            <person name="Mongodin E.F."/>
            <person name="Sensabaugh G.F."/>
            <person name="Perdreau-Remington F."/>
        </authorList>
    </citation>
    <scope>NUCLEOTIDE SEQUENCE [LARGE SCALE GENOMIC DNA]</scope>
    <source>
        <strain>USA300</strain>
    </source>
</reference>
<proteinExistence type="inferred from homology"/>
<organism>
    <name type="scientific">Staphylococcus aureus (strain USA300)</name>
    <dbReference type="NCBI Taxonomy" id="367830"/>
    <lineage>
        <taxon>Bacteria</taxon>
        <taxon>Bacillati</taxon>
        <taxon>Bacillota</taxon>
        <taxon>Bacilli</taxon>
        <taxon>Bacillales</taxon>
        <taxon>Staphylococcaceae</taxon>
        <taxon>Staphylococcus</taxon>
    </lineage>
</organism>
<evidence type="ECO:0000250" key="1"/>
<evidence type="ECO:0000255" key="2">
    <source>
        <dbReference type="PROSITE-ProRule" id="PRU10013"/>
    </source>
</evidence>
<evidence type="ECO:0000256" key="3">
    <source>
        <dbReference type="SAM" id="MobiDB-lite"/>
    </source>
</evidence>
<evidence type="ECO:0000305" key="4"/>
<name>CATA_STAA3</name>
<comment type="function">
    <text evidence="1">Decomposes hydrogen peroxide into water and oxygen; serves to protect cells from the toxic effects of hydrogen peroxide.</text>
</comment>
<comment type="catalytic activity">
    <reaction evidence="2">
        <text>2 H2O2 = O2 + 2 H2O</text>
        <dbReference type="Rhea" id="RHEA:20309"/>
        <dbReference type="ChEBI" id="CHEBI:15377"/>
        <dbReference type="ChEBI" id="CHEBI:15379"/>
        <dbReference type="ChEBI" id="CHEBI:16240"/>
        <dbReference type="EC" id="1.11.1.6"/>
    </reaction>
</comment>
<comment type="cofactor">
    <cofactor evidence="1">
        <name>heme</name>
        <dbReference type="ChEBI" id="CHEBI:30413"/>
    </cofactor>
</comment>
<comment type="subunit">
    <text evidence="1">Homodimer.</text>
</comment>
<comment type="similarity">
    <text evidence="4">Belongs to the catalase family.</text>
</comment>
<accession>Q2FH99</accession>
<dbReference type="EC" id="1.11.1.6"/>
<dbReference type="EMBL" id="CP000255">
    <property type="protein sequence ID" value="ABD20999.1"/>
    <property type="molecule type" value="Genomic_DNA"/>
</dbReference>
<dbReference type="RefSeq" id="WP_000082539.1">
    <property type="nucleotide sequence ID" value="NZ_CP027476.1"/>
</dbReference>
<dbReference type="SMR" id="Q2FH99"/>
<dbReference type="KEGG" id="saa:SAUSA300_1232"/>
<dbReference type="HOGENOM" id="CLU_010645_2_0_9"/>
<dbReference type="Proteomes" id="UP000001939">
    <property type="component" value="Chromosome"/>
</dbReference>
<dbReference type="GO" id="GO:0005737">
    <property type="term" value="C:cytoplasm"/>
    <property type="evidence" value="ECO:0007669"/>
    <property type="project" value="TreeGrafter"/>
</dbReference>
<dbReference type="GO" id="GO:0004096">
    <property type="term" value="F:catalase activity"/>
    <property type="evidence" value="ECO:0007669"/>
    <property type="project" value="UniProtKB-EC"/>
</dbReference>
<dbReference type="GO" id="GO:0020037">
    <property type="term" value="F:heme binding"/>
    <property type="evidence" value="ECO:0007669"/>
    <property type="project" value="InterPro"/>
</dbReference>
<dbReference type="GO" id="GO:0046872">
    <property type="term" value="F:metal ion binding"/>
    <property type="evidence" value="ECO:0007669"/>
    <property type="project" value="UniProtKB-KW"/>
</dbReference>
<dbReference type="GO" id="GO:0042744">
    <property type="term" value="P:hydrogen peroxide catabolic process"/>
    <property type="evidence" value="ECO:0007669"/>
    <property type="project" value="UniProtKB-KW"/>
</dbReference>
<dbReference type="GO" id="GO:0042542">
    <property type="term" value="P:response to hydrogen peroxide"/>
    <property type="evidence" value="ECO:0007669"/>
    <property type="project" value="TreeGrafter"/>
</dbReference>
<dbReference type="CDD" id="cd08156">
    <property type="entry name" value="catalase_clade_3"/>
    <property type="match status" value="1"/>
</dbReference>
<dbReference type="FunFam" id="2.40.180.10:FF:000001">
    <property type="entry name" value="Catalase"/>
    <property type="match status" value="1"/>
</dbReference>
<dbReference type="Gene3D" id="2.40.180.10">
    <property type="entry name" value="Catalase core domain"/>
    <property type="match status" value="1"/>
</dbReference>
<dbReference type="InterPro" id="IPR018028">
    <property type="entry name" value="Catalase"/>
</dbReference>
<dbReference type="InterPro" id="IPR040333">
    <property type="entry name" value="Catalase_3"/>
</dbReference>
<dbReference type="InterPro" id="IPR024708">
    <property type="entry name" value="Catalase_AS"/>
</dbReference>
<dbReference type="InterPro" id="IPR024711">
    <property type="entry name" value="Catalase_clade1/3"/>
</dbReference>
<dbReference type="InterPro" id="IPR011614">
    <property type="entry name" value="Catalase_core"/>
</dbReference>
<dbReference type="InterPro" id="IPR002226">
    <property type="entry name" value="Catalase_haem_BS"/>
</dbReference>
<dbReference type="InterPro" id="IPR010582">
    <property type="entry name" value="Catalase_immune_responsive"/>
</dbReference>
<dbReference type="InterPro" id="IPR020835">
    <property type="entry name" value="Catalase_sf"/>
</dbReference>
<dbReference type="PANTHER" id="PTHR11465">
    <property type="entry name" value="CATALASE"/>
    <property type="match status" value="1"/>
</dbReference>
<dbReference type="PANTHER" id="PTHR11465:SF61">
    <property type="entry name" value="CATALASE"/>
    <property type="match status" value="1"/>
</dbReference>
<dbReference type="Pfam" id="PF00199">
    <property type="entry name" value="Catalase"/>
    <property type="match status" value="1"/>
</dbReference>
<dbReference type="Pfam" id="PF06628">
    <property type="entry name" value="Catalase-rel"/>
    <property type="match status" value="1"/>
</dbReference>
<dbReference type="PIRSF" id="PIRSF038928">
    <property type="entry name" value="Catalase_clade1-3"/>
    <property type="match status" value="1"/>
</dbReference>
<dbReference type="PRINTS" id="PR00067">
    <property type="entry name" value="CATALASE"/>
</dbReference>
<dbReference type="SMART" id="SM01060">
    <property type="entry name" value="Catalase"/>
    <property type="match status" value="1"/>
</dbReference>
<dbReference type="SUPFAM" id="SSF56634">
    <property type="entry name" value="Heme-dependent catalase-like"/>
    <property type="match status" value="1"/>
</dbReference>
<dbReference type="PROSITE" id="PS00437">
    <property type="entry name" value="CATALASE_1"/>
    <property type="match status" value="1"/>
</dbReference>
<dbReference type="PROSITE" id="PS00438">
    <property type="entry name" value="CATALASE_2"/>
    <property type="match status" value="1"/>
</dbReference>
<dbReference type="PROSITE" id="PS51402">
    <property type="entry name" value="CATALASE_3"/>
    <property type="match status" value="1"/>
</dbReference>
<keyword id="KW-0349">Heme</keyword>
<keyword id="KW-0376">Hydrogen peroxide</keyword>
<keyword id="KW-0408">Iron</keyword>
<keyword id="KW-0479">Metal-binding</keyword>
<keyword id="KW-0560">Oxidoreductase</keyword>
<keyword id="KW-0575">Peroxidase</keyword>